<protein>
    <recommendedName>
        <fullName evidence="1">o-succinylbenzoate synthase</fullName>
        <shortName evidence="1">OSB synthase</shortName>
        <shortName evidence="1">OSBS</shortName>
        <ecNumber evidence="1">4.2.1.113</ecNumber>
    </recommendedName>
    <alternativeName>
        <fullName evidence="1">4-(2'-carboxyphenyl)-4-oxybutyric acid synthase</fullName>
    </alternativeName>
    <alternativeName>
        <fullName evidence="1">o-succinylbenzoic acid synthase</fullName>
    </alternativeName>
</protein>
<accession>P58485</accession>
<gene>
    <name evidence="1" type="primary">menC</name>
    <name type="ordered locus">STY2536</name>
    <name type="ordered locus">t0557</name>
</gene>
<comment type="function">
    <text evidence="1">Converts 2-succinyl-6-hydroxy-2,4-cyclohexadiene-1-carboxylate (SHCHC) to 2-succinylbenzoate (OSB).</text>
</comment>
<comment type="catalytic activity">
    <reaction evidence="1">
        <text>(1R,6R)-6-hydroxy-2-succinyl-cyclohexa-2,4-diene-1-carboxylate = 2-succinylbenzoate + H2O</text>
        <dbReference type="Rhea" id="RHEA:10196"/>
        <dbReference type="ChEBI" id="CHEBI:15377"/>
        <dbReference type="ChEBI" id="CHEBI:18325"/>
        <dbReference type="ChEBI" id="CHEBI:58689"/>
        <dbReference type="EC" id="4.2.1.113"/>
    </reaction>
</comment>
<comment type="cofactor">
    <cofactor evidence="1">
        <name>a divalent metal cation</name>
        <dbReference type="ChEBI" id="CHEBI:60240"/>
    </cofactor>
</comment>
<comment type="pathway">
    <text evidence="1">Quinol/quinone metabolism; 1,4-dihydroxy-2-naphthoate biosynthesis; 1,4-dihydroxy-2-naphthoate from chorismate: step 4/7.</text>
</comment>
<comment type="pathway">
    <text evidence="1">Quinol/quinone metabolism; menaquinone biosynthesis.</text>
</comment>
<comment type="similarity">
    <text evidence="1">Belongs to the mandelate racemase/muconate lactonizing enzyme family. MenC type 1 subfamily.</text>
</comment>
<dbReference type="EC" id="4.2.1.113" evidence="1"/>
<dbReference type="EMBL" id="AL513382">
    <property type="protein sequence ID" value="CAD07539.1"/>
    <property type="molecule type" value="Genomic_DNA"/>
</dbReference>
<dbReference type="EMBL" id="AE014613">
    <property type="protein sequence ID" value="AAO68263.1"/>
    <property type="molecule type" value="Genomic_DNA"/>
</dbReference>
<dbReference type="RefSeq" id="NP_456849.1">
    <property type="nucleotide sequence ID" value="NC_003198.1"/>
</dbReference>
<dbReference type="RefSeq" id="WP_001255562.1">
    <property type="nucleotide sequence ID" value="NZ_WSUR01000039.1"/>
</dbReference>
<dbReference type="SMR" id="P58485"/>
<dbReference type="STRING" id="220341.gene:17586436"/>
<dbReference type="KEGG" id="stt:t0557"/>
<dbReference type="KEGG" id="sty:STY2536"/>
<dbReference type="PATRIC" id="fig|220341.7.peg.2567"/>
<dbReference type="eggNOG" id="COG1441">
    <property type="taxonomic scope" value="Bacteria"/>
</dbReference>
<dbReference type="HOGENOM" id="CLU_030273_0_1_6"/>
<dbReference type="OMA" id="PLCYGDP"/>
<dbReference type="OrthoDB" id="3725747at2"/>
<dbReference type="UniPathway" id="UPA00079"/>
<dbReference type="UniPathway" id="UPA01057">
    <property type="reaction ID" value="UER00165"/>
</dbReference>
<dbReference type="Proteomes" id="UP000000541">
    <property type="component" value="Chromosome"/>
</dbReference>
<dbReference type="Proteomes" id="UP000002670">
    <property type="component" value="Chromosome"/>
</dbReference>
<dbReference type="GO" id="GO:0000287">
    <property type="term" value="F:magnesium ion binding"/>
    <property type="evidence" value="ECO:0007669"/>
    <property type="project" value="UniProtKB-UniRule"/>
</dbReference>
<dbReference type="GO" id="GO:0043748">
    <property type="term" value="F:O-succinylbenzoate synthase activity"/>
    <property type="evidence" value="ECO:0007669"/>
    <property type="project" value="UniProtKB-EC"/>
</dbReference>
<dbReference type="GO" id="GO:0009234">
    <property type="term" value="P:menaquinone biosynthetic process"/>
    <property type="evidence" value="ECO:0007669"/>
    <property type="project" value="UniProtKB-UniRule"/>
</dbReference>
<dbReference type="CDD" id="cd03320">
    <property type="entry name" value="OSBS"/>
    <property type="match status" value="1"/>
</dbReference>
<dbReference type="FunFam" id="3.20.20.120:FF:000006">
    <property type="entry name" value="o-succinylbenzoate synthase"/>
    <property type="match status" value="1"/>
</dbReference>
<dbReference type="Gene3D" id="3.20.20.120">
    <property type="entry name" value="Enolase-like C-terminal domain"/>
    <property type="match status" value="1"/>
</dbReference>
<dbReference type="Gene3D" id="3.30.390.10">
    <property type="entry name" value="Enolase-like, N-terminal domain"/>
    <property type="match status" value="1"/>
</dbReference>
<dbReference type="HAMAP" id="MF_00470">
    <property type="entry name" value="MenC_1"/>
    <property type="match status" value="1"/>
</dbReference>
<dbReference type="InterPro" id="IPR036849">
    <property type="entry name" value="Enolase-like_C_sf"/>
</dbReference>
<dbReference type="InterPro" id="IPR029017">
    <property type="entry name" value="Enolase-like_N"/>
</dbReference>
<dbReference type="InterPro" id="IPR029065">
    <property type="entry name" value="Enolase_C-like"/>
</dbReference>
<dbReference type="InterPro" id="IPR013342">
    <property type="entry name" value="Mandelate_racemase_C"/>
</dbReference>
<dbReference type="InterPro" id="IPR010196">
    <property type="entry name" value="OSB_synthase_MenC1"/>
</dbReference>
<dbReference type="InterPro" id="IPR041338">
    <property type="entry name" value="OSBS_N"/>
</dbReference>
<dbReference type="NCBIfam" id="TIGR01927">
    <property type="entry name" value="menC_gam_Gplu"/>
    <property type="match status" value="1"/>
</dbReference>
<dbReference type="NCBIfam" id="NF003473">
    <property type="entry name" value="PRK05105.1"/>
    <property type="match status" value="1"/>
</dbReference>
<dbReference type="PANTHER" id="PTHR48073:SF2">
    <property type="entry name" value="O-SUCCINYLBENZOATE SYNTHASE"/>
    <property type="match status" value="1"/>
</dbReference>
<dbReference type="PANTHER" id="PTHR48073">
    <property type="entry name" value="O-SUCCINYLBENZOATE SYNTHASE-RELATED"/>
    <property type="match status" value="1"/>
</dbReference>
<dbReference type="Pfam" id="PF21508">
    <property type="entry name" value="MenC_N"/>
    <property type="match status" value="1"/>
</dbReference>
<dbReference type="Pfam" id="PF13378">
    <property type="entry name" value="MR_MLE_C"/>
    <property type="match status" value="1"/>
</dbReference>
<dbReference type="SFLD" id="SFLDS00001">
    <property type="entry name" value="Enolase"/>
    <property type="match status" value="1"/>
</dbReference>
<dbReference type="SFLD" id="SFLDF00009">
    <property type="entry name" value="o-succinylbenzoate_synthase"/>
    <property type="match status" value="1"/>
</dbReference>
<dbReference type="SMART" id="SM00922">
    <property type="entry name" value="MR_MLE"/>
    <property type="match status" value="1"/>
</dbReference>
<dbReference type="SUPFAM" id="SSF51604">
    <property type="entry name" value="Enolase C-terminal domain-like"/>
    <property type="match status" value="1"/>
</dbReference>
<dbReference type="SUPFAM" id="SSF54826">
    <property type="entry name" value="Enolase N-terminal domain-like"/>
    <property type="match status" value="1"/>
</dbReference>
<sequence length="320" mass="35359">MRSAQVYRWQIPMDAGVVLRDRRLKTRDGLYVCLRDGEREGWGEISPLPGFSQETWEEAQTALLTWVNDWLQGSEGLPEMPSVAFGASCALAELTGVLPEAADYRAAPLCTGDPDDLVLRLADMPGEKIAKVKVGLYEAVRDGMVVNLLLEAIPDLHLRLDANRAWTPLKAQQFAKYVNPDYRARIAFLEEPCKTRDDSRAFARETGIAIAWDESLREADFTFEAEEGVRAVVIKPTLTGSLDKVREQVAAAHALGLTAVISSSIESSLGLTQLARIAAWLTPGTLPGLDTLHLMQAQQVRPWPGNALPCLKRDELERLL</sequence>
<evidence type="ECO:0000255" key="1">
    <source>
        <dbReference type="HAMAP-Rule" id="MF_00470"/>
    </source>
</evidence>
<reference key="1">
    <citation type="journal article" date="2001" name="Nature">
        <title>Complete genome sequence of a multiple drug resistant Salmonella enterica serovar Typhi CT18.</title>
        <authorList>
            <person name="Parkhill J."/>
            <person name="Dougan G."/>
            <person name="James K.D."/>
            <person name="Thomson N.R."/>
            <person name="Pickard D."/>
            <person name="Wain J."/>
            <person name="Churcher C.M."/>
            <person name="Mungall K.L."/>
            <person name="Bentley S.D."/>
            <person name="Holden M.T.G."/>
            <person name="Sebaihia M."/>
            <person name="Baker S."/>
            <person name="Basham D."/>
            <person name="Brooks K."/>
            <person name="Chillingworth T."/>
            <person name="Connerton P."/>
            <person name="Cronin A."/>
            <person name="Davis P."/>
            <person name="Davies R.M."/>
            <person name="Dowd L."/>
            <person name="White N."/>
            <person name="Farrar J."/>
            <person name="Feltwell T."/>
            <person name="Hamlin N."/>
            <person name="Haque A."/>
            <person name="Hien T.T."/>
            <person name="Holroyd S."/>
            <person name="Jagels K."/>
            <person name="Krogh A."/>
            <person name="Larsen T.S."/>
            <person name="Leather S."/>
            <person name="Moule S."/>
            <person name="O'Gaora P."/>
            <person name="Parry C."/>
            <person name="Quail M.A."/>
            <person name="Rutherford K.M."/>
            <person name="Simmonds M."/>
            <person name="Skelton J."/>
            <person name="Stevens K."/>
            <person name="Whitehead S."/>
            <person name="Barrell B.G."/>
        </authorList>
    </citation>
    <scope>NUCLEOTIDE SEQUENCE [LARGE SCALE GENOMIC DNA]</scope>
    <source>
        <strain>CT18</strain>
    </source>
</reference>
<reference key="2">
    <citation type="journal article" date="2003" name="J. Bacteriol.">
        <title>Comparative genomics of Salmonella enterica serovar Typhi strains Ty2 and CT18.</title>
        <authorList>
            <person name="Deng W."/>
            <person name="Liou S.-R."/>
            <person name="Plunkett G. III"/>
            <person name="Mayhew G.F."/>
            <person name="Rose D.J."/>
            <person name="Burland V."/>
            <person name="Kodoyianni V."/>
            <person name="Schwartz D.C."/>
            <person name="Blattner F.R."/>
        </authorList>
    </citation>
    <scope>NUCLEOTIDE SEQUENCE [LARGE SCALE GENOMIC DNA]</scope>
    <source>
        <strain>ATCC 700931 / Ty2</strain>
    </source>
</reference>
<keyword id="KW-0456">Lyase</keyword>
<keyword id="KW-0460">Magnesium</keyword>
<keyword id="KW-0474">Menaquinone biosynthesis</keyword>
<keyword id="KW-0479">Metal-binding</keyword>
<organism>
    <name type="scientific">Salmonella typhi</name>
    <dbReference type="NCBI Taxonomy" id="90370"/>
    <lineage>
        <taxon>Bacteria</taxon>
        <taxon>Pseudomonadati</taxon>
        <taxon>Pseudomonadota</taxon>
        <taxon>Gammaproteobacteria</taxon>
        <taxon>Enterobacterales</taxon>
        <taxon>Enterobacteriaceae</taxon>
        <taxon>Salmonella</taxon>
    </lineage>
</organism>
<name>MENC_SALTI</name>
<feature type="chain" id="PRO_0000171274" description="o-succinylbenzoate synthase">
    <location>
        <begin position="1"/>
        <end position="320"/>
    </location>
</feature>
<feature type="active site" description="Proton donor" evidence="1">
    <location>
        <position position="133"/>
    </location>
</feature>
<feature type="active site" description="Proton acceptor" evidence="1">
    <location>
        <position position="235"/>
    </location>
</feature>
<feature type="binding site" evidence="1">
    <location>
        <position position="161"/>
    </location>
    <ligand>
        <name>Mg(2+)</name>
        <dbReference type="ChEBI" id="CHEBI:18420"/>
    </ligand>
</feature>
<feature type="binding site" evidence="1">
    <location>
        <position position="190"/>
    </location>
    <ligand>
        <name>Mg(2+)</name>
        <dbReference type="ChEBI" id="CHEBI:18420"/>
    </ligand>
</feature>
<feature type="binding site" evidence="1">
    <location>
        <position position="213"/>
    </location>
    <ligand>
        <name>Mg(2+)</name>
        <dbReference type="ChEBI" id="CHEBI:18420"/>
    </ligand>
</feature>
<proteinExistence type="inferred from homology"/>